<name>G1PDH_METHJ</name>
<proteinExistence type="inferred from homology"/>
<protein>
    <recommendedName>
        <fullName evidence="1">Glycerol-1-phosphate dehydrogenase [NAD(P)+]</fullName>
        <shortName evidence="1">G1P dehydrogenase</shortName>
        <shortName evidence="1">G1PDH</shortName>
        <ecNumber evidence="1">1.1.1.261</ecNumber>
    </recommendedName>
    <alternativeName>
        <fullName evidence="1">Enantiomeric glycerophosphate synthase</fullName>
    </alternativeName>
    <alternativeName>
        <fullName evidence="1">sn-glycerol-1-phosphate dehydrogenase</fullName>
    </alternativeName>
</protein>
<reference key="1">
    <citation type="journal article" date="2016" name="Stand. Genomic Sci.">
        <title>Complete genome sequence of Methanospirillum hungatei type strain JF1.</title>
        <authorList>
            <person name="Gunsalus R.P."/>
            <person name="Cook L.E."/>
            <person name="Crable B."/>
            <person name="Rohlin L."/>
            <person name="McDonald E."/>
            <person name="Mouttaki H."/>
            <person name="Sieber J.R."/>
            <person name="Poweleit N."/>
            <person name="Zhou H."/>
            <person name="Lapidus A.L."/>
            <person name="Daligault H.E."/>
            <person name="Land M."/>
            <person name="Gilna P."/>
            <person name="Ivanova N."/>
            <person name="Kyrpides N."/>
            <person name="Culley D.E."/>
            <person name="McInerney M.J."/>
        </authorList>
    </citation>
    <scope>NUCLEOTIDE SEQUENCE [LARGE SCALE GENOMIC DNA]</scope>
    <source>
        <strain>ATCC 27890 / DSM 864 / NBRC 100397 / JF-1</strain>
    </source>
</reference>
<accession>Q2FPC7</accession>
<evidence type="ECO:0000255" key="1">
    <source>
        <dbReference type="HAMAP-Rule" id="MF_00497"/>
    </source>
</evidence>
<sequence length="359" mass="38362">MSTDPVQVLQPDGFNKSRWTQLPRDVLIGHQAIMQLPDIIADIKPGRSVLLISGGTTREVAGNTVADILKDQYEVRRFVAGKLDADTLEACSQASSSADFLIGVGGGRVIDCAKIVSYKQGKPFISVPTAASHDGIISGRATLPTETGSVSVGAHPPIAVVADTGIISQAPHRLMASGCADVISNYTAILDWELAHRLRGEQISEYAIALSKMTAEILVKDANLIKPGQEEAAWIVVKALVSSGVSMAIAGSSRPASGGEHKFGHALERLMPGAALHGEACGIGSIMTMYLHGGDWREIRSSLARIGAPTTPRELNIPDEVIVEALMKARDIRPERFTILDMGLTRESAEHLVQMLYEE</sequence>
<organism>
    <name type="scientific">Methanospirillum hungatei JF-1 (strain ATCC 27890 / DSM 864 / NBRC 100397 / JF-1)</name>
    <dbReference type="NCBI Taxonomy" id="323259"/>
    <lineage>
        <taxon>Archaea</taxon>
        <taxon>Methanobacteriati</taxon>
        <taxon>Methanobacteriota</taxon>
        <taxon>Stenosarchaea group</taxon>
        <taxon>Methanomicrobia</taxon>
        <taxon>Methanomicrobiales</taxon>
        <taxon>Methanospirillaceae</taxon>
        <taxon>Methanospirillum</taxon>
    </lineage>
</organism>
<feature type="chain" id="PRO_0000350651" description="Glycerol-1-phosphate dehydrogenase [NAD(P)+]">
    <location>
        <begin position="1"/>
        <end position="359"/>
    </location>
</feature>
<feature type="binding site" evidence="1">
    <location>
        <begin position="107"/>
        <end position="111"/>
    </location>
    <ligand>
        <name>NAD(+)</name>
        <dbReference type="ChEBI" id="CHEBI:57540"/>
    </ligand>
</feature>
<feature type="binding site" evidence="1">
    <location>
        <begin position="129"/>
        <end position="132"/>
    </location>
    <ligand>
        <name>NAD(+)</name>
        <dbReference type="ChEBI" id="CHEBI:57540"/>
    </ligand>
</feature>
<feature type="binding site" evidence="1">
    <location>
        <position position="134"/>
    </location>
    <ligand>
        <name>substrate</name>
    </ligand>
</feature>
<feature type="binding site" evidence="1">
    <location>
        <position position="138"/>
    </location>
    <ligand>
        <name>NAD(+)</name>
        <dbReference type="ChEBI" id="CHEBI:57540"/>
    </ligand>
</feature>
<feature type="binding site" evidence="1">
    <location>
        <position position="181"/>
    </location>
    <ligand>
        <name>substrate</name>
    </ligand>
</feature>
<feature type="binding site" evidence="1">
    <location>
        <position position="181"/>
    </location>
    <ligand>
        <name>Zn(2+)</name>
        <dbReference type="ChEBI" id="CHEBI:29105"/>
        <note>catalytic</note>
    </ligand>
</feature>
<feature type="binding site" evidence="1">
    <location>
        <position position="261"/>
    </location>
    <ligand>
        <name>Zn(2+)</name>
        <dbReference type="ChEBI" id="CHEBI:29105"/>
        <note>catalytic</note>
    </ligand>
</feature>
<feature type="binding site" evidence="1">
    <location>
        <position position="265"/>
    </location>
    <ligand>
        <name>substrate</name>
    </ligand>
</feature>
<feature type="binding site" evidence="1">
    <location>
        <position position="277"/>
    </location>
    <ligand>
        <name>Zn(2+)</name>
        <dbReference type="ChEBI" id="CHEBI:29105"/>
        <note>catalytic</note>
    </ligand>
</feature>
<comment type="function">
    <text evidence="1">Catalyzes the NAD(P)H-dependent reduction of dihydroxyacetonephosphate (DHAP or glycerone phosphate) to glycerol 1-phosphate (G1P). The G1P thus generated is used as the glycerophosphate backbone of phospholipids in the cellular membranes of Archaea.</text>
</comment>
<comment type="catalytic activity">
    <reaction evidence="1">
        <text>sn-glycerol 1-phosphate + NAD(+) = dihydroxyacetone phosphate + NADH + H(+)</text>
        <dbReference type="Rhea" id="RHEA:21412"/>
        <dbReference type="ChEBI" id="CHEBI:15378"/>
        <dbReference type="ChEBI" id="CHEBI:57540"/>
        <dbReference type="ChEBI" id="CHEBI:57642"/>
        <dbReference type="ChEBI" id="CHEBI:57685"/>
        <dbReference type="ChEBI" id="CHEBI:57945"/>
        <dbReference type="EC" id="1.1.1.261"/>
    </reaction>
</comment>
<comment type="catalytic activity">
    <reaction evidence="1">
        <text>sn-glycerol 1-phosphate + NADP(+) = dihydroxyacetone phosphate + NADPH + H(+)</text>
        <dbReference type="Rhea" id="RHEA:21416"/>
        <dbReference type="ChEBI" id="CHEBI:15378"/>
        <dbReference type="ChEBI" id="CHEBI:57642"/>
        <dbReference type="ChEBI" id="CHEBI:57685"/>
        <dbReference type="ChEBI" id="CHEBI:57783"/>
        <dbReference type="ChEBI" id="CHEBI:58349"/>
        <dbReference type="EC" id="1.1.1.261"/>
    </reaction>
</comment>
<comment type="cofactor">
    <cofactor evidence="1">
        <name>Zn(2+)</name>
        <dbReference type="ChEBI" id="CHEBI:29105"/>
    </cofactor>
    <text evidence="1">Binds 1 zinc ion per subunit.</text>
</comment>
<comment type="pathway">
    <text evidence="1">Membrane lipid metabolism; glycerophospholipid metabolism.</text>
</comment>
<comment type="subcellular location">
    <subcellularLocation>
        <location evidence="1">Cytoplasm</location>
    </subcellularLocation>
</comment>
<comment type="similarity">
    <text evidence="1">Belongs to the glycerol-1-phosphate dehydrogenase family.</text>
</comment>
<gene>
    <name evidence="1" type="primary">egsA</name>
    <name type="ordered locus">Mhun_1136</name>
</gene>
<dbReference type="EC" id="1.1.1.261" evidence="1"/>
<dbReference type="EMBL" id="CP000254">
    <property type="protein sequence ID" value="ABD40885.1"/>
    <property type="molecule type" value="Genomic_DNA"/>
</dbReference>
<dbReference type="RefSeq" id="WP_011448163.1">
    <property type="nucleotide sequence ID" value="NC_007796.1"/>
</dbReference>
<dbReference type="SMR" id="Q2FPC7"/>
<dbReference type="FunCoup" id="Q2FPC7">
    <property type="interactions" value="10"/>
</dbReference>
<dbReference type="STRING" id="323259.Mhun_1136"/>
<dbReference type="EnsemblBacteria" id="ABD40885">
    <property type="protein sequence ID" value="ABD40885"/>
    <property type="gene ID" value="Mhun_1136"/>
</dbReference>
<dbReference type="GeneID" id="3922514"/>
<dbReference type="KEGG" id="mhu:Mhun_1136"/>
<dbReference type="eggNOG" id="arCOG00982">
    <property type="taxonomic scope" value="Archaea"/>
</dbReference>
<dbReference type="HOGENOM" id="CLU_038362_0_0_2"/>
<dbReference type="InParanoid" id="Q2FPC7"/>
<dbReference type="OrthoDB" id="8656at2157"/>
<dbReference type="UniPathway" id="UPA00940"/>
<dbReference type="Proteomes" id="UP000001941">
    <property type="component" value="Chromosome"/>
</dbReference>
<dbReference type="GO" id="GO:0005737">
    <property type="term" value="C:cytoplasm"/>
    <property type="evidence" value="ECO:0007669"/>
    <property type="project" value="UniProtKB-SubCell"/>
</dbReference>
<dbReference type="GO" id="GO:0106357">
    <property type="term" value="F:glycerol-1-phosphate dehydrogenase (NAD+) activity"/>
    <property type="evidence" value="ECO:0007669"/>
    <property type="project" value="RHEA"/>
</dbReference>
<dbReference type="GO" id="GO:0106358">
    <property type="term" value="F:glycerol-1-phosphate dehydrogenase (NADP+) activity"/>
    <property type="evidence" value="ECO:0007669"/>
    <property type="project" value="RHEA"/>
</dbReference>
<dbReference type="GO" id="GO:0046872">
    <property type="term" value="F:metal ion binding"/>
    <property type="evidence" value="ECO:0007669"/>
    <property type="project" value="UniProtKB-KW"/>
</dbReference>
<dbReference type="GO" id="GO:0006650">
    <property type="term" value="P:glycerophospholipid metabolic process"/>
    <property type="evidence" value="ECO:0007669"/>
    <property type="project" value="UniProtKB-UniRule"/>
</dbReference>
<dbReference type="GO" id="GO:0008654">
    <property type="term" value="P:phospholipid biosynthetic process"/>
    <property type="evidence" value="ECO:0007669"/>
    <property type="project" value="UniProtKB-KW"/>
</dbReference>
<dbReference type="CDD" id="cd08173">
    <property type="entry name" value="Gro1PDH"/>
    <property type="match status" value="1"/>
</dbReference>
<dbReference type="Gene3D" id="3.40.50.1970">
    <property type="match status" value="1"/>
</dbReference>
<dbReference type="Gene3D" id="1.20.1090.10">
    <property type="entry name" value="Dehydroquinate synthase-like - alpha domain"/>
    <property type="match status" value="1"/>
</dbReference>
<dbReference type="HAMAP" id="MF_00497_A">
    <property type="entry name" value="G1P_dehydrogenase_A"/>
    <property type="match status" value="1"/>
</dbReference>
<dbReference type="InterPro" id="IPR023002">
    <property type="entry name" value="G1P_dehydrogenase_arc"/>
</dbReference>
<dbReference type="InterPro" id="IPR032837">
    <property type="entry name" value="G1PDH"/>
</dbReference>
<dbReference type="InterPro" id="IPR016205">
    <property type="entry name" value="Glycerol_DH"/>
</dbReference>
<dbReference type="NCBIfam" id="NF002022">
    <property type="entry name" value="PRK00843.1"/>
    <property type="match status" value="1"/>
</dbReference>
<dbReference type="PANTHER" id="PTHR43616">
    <property type="entry name" value="GLYCEROL DEHYDROGENASE"/>
    <property type="match status" value="1"/>
</dbReference>
<dbReference type="PANTHER" id="PTHR43616:SF5">
    <property type="entry name" value="GLYCEROL DEHYDROGENASE 1"/>
    <property type="match status" value="1"/>
</dbReference>
<dbReference type="Pfam" id="PF13685">
    <property type="entry name" value="Fe-ADH_2"/>
    <property type="match status" value="1"/>
</dbReference>
<dbReference type="PIRSF" id="PIRSF000112">
    <property type="entry name" value="Glycerol_dehydrogenase"/>
    <property type="match status" value="1"/>
</dbReference>
<dbReference type="SUPFAM" id="SSF56796">
    <property type="entry name" value="Dehydroquinate synthase-like"/>
    <property type="match status" value="1"/>
</dbReference>
<keyword id="KW-0963">Cytoplasm</keyword>
<keyword id="KW-0444">Lipid biosynthesis</keyword>
<keyword id="KW-0443">Lipid metabolism</keyword>
<keyword id="KW-0479">Metal-binding</keyword>
<keyword id="KW-0520">NAD</keyword>
<keyword id="KW-0521">NADP</keyword>
<keyword id="KW-0560">Oxidoreductase</keyword>
<keyword id="KW-0594">Phospholipid biosynthesis</keyword>
<keyword id="KW-1208">Phospholipid metabolism</keyword>
<keyword id="KW-1185">Reference proteome</keyword>
<keyword id="KW-0862">Zinc</keyword>